<organism>
    <name type="scientific">Methanocaldococcus jannaschii (strain ATCC 43067 / DSM 2661 / JAL-1 / JCM 10045 / NBRC 100440)</name>
    <name type="common">Methanococcus jannaschii</name>
    <dbReference type="NCBI Taxonomy" id="243232"/>
    <lineage>
        <taxon>Archaea</taxon>
        <taxon>Methanobacteriati</taxon>
        <taxon>Methanobacteriota</taxon>
        <taxon>Methanomada group</taxon>
        <taxon>Methanococci</taxon>
        <taxon>Methanococcales</taxon>
        <taxon>Methanocaldococcaceae</taxon>
        <taxon>Methanocaldococcus</taxon>
    </lineage>
</organism>
<gene>
    <name type="ordered locus">MJ1662</name>
</gene>
<reference key="1">
    <citation type="journal article" date="1996" name="Science">
        <title>Complete genome sequence of the methanogenic archaeon, Methanococcus jannaschii.</title>
        <authorList>
            <person name="Bult C.J."/>
            <person name="White O."/>
            <person name="Olsen G.J."/>
            <person name="Zhou L."/>
            <person name="Fleischmann R.D."/>
            <person name="Sutton G.G."/>
            <person name="Blake J.A."/>
            <person name="FitzGerald L.M."/>
            <person name="Clayton R.A."/>
            <person name="Gocayne J.D."/>
            <person name="Kerlavage A.R."/>
            <person name="Dougherty B.A."/>
            <person name="Tomb J.-F."/>
            <person name="Adams M.D."/>
            <person name="Reich C.I."/>
            <person name="Overbeek R."/>
            <person name="Kirkness E.F."/>
            <person name="Weinstock K.G."/>
            <person name="Merrick J.M."/>
            <person name="Glodek A."/>
            <person name="Scott J.L."/>
            <person name="Geoghagen N.S.M."/>
            <person name="Weidman J.F."/>
            <person name="Fuhrmann J.L."/>
            <person name="Nguyen D."/>
            <person name="Utterback T.R."/>
            <person name="Kelley J.M."/>
            <person name="Peterson J.D."/>
            <person name="Sadow P.W."/>
            <person name="Hanna M.C."/>
            <person name="Cotton M.D."/>
            <person name="Roberts K.M."/>
            <person name="Hurst M.A."/>
            <person name="Kaine B.P."/>
            <person name="Borodovsky M."/>
            <person name="Klenk H.-P."/>
            <person name="Fraser C.M."/>
            <person name="Smith H.O."/>
            <person name="Woese C.R."/>
            <person name="Venter J.C."/>
        </authorList>
    </citation>
    <scope>NUCLEOTIDE SEQUENCE [LARGE SCALE GENOMIC DNA]</scope>
    <source>
        <strain>ATCC 43067 / DSM 2661 / JAL-1 / JCM 10045 / NBRC 100440</strain>
    </source>
</reference>
<proteinExistence type="inferred from homology"/>
<protein>
    <recommendedName>
        <fullName>Uncharacterized ABC transporter ATP-binding protein MJ1662</fullName>
    </recommendedName>
</protein>
<sequence>MITVKVKNLTKKYGDFKALDKVSFEAKKGEILGIVGKSGAGKSTLIRILRGSLDYDEGEVEILGRKDNFKEITAIHLQRNFALWAEPVINNIIRKLYAIRNNADEQLPLEEEWEEYEKTAIEILKLVGLEHKKDAFANILSGGEKQRLILGRQIAKIYEKGEGVLLLDEPATMACPASKQKLLDVIKNIRDKLGITVIITSHLPEIHRYLCDRLILLENGKVKMDGDVEEVLNEFLKKMKPPYKRTPNIKDNAIIQVRNVSKRYYVVHGGETLNLRNVSFDVKEGEILSIIGPSGVGKTVIMRLMAGLELPDEGKIIVDGIDITNYGWERIELRKRIGIMHQEFSLPYYQTVENLLKYRLGLKGEKAIAHAKAKAEELGLSPKIVDALYQLIDVPESERISKLQKMGLTEDIIYKLFPPVVESFEPEEILEALDLGKDILKKKVIELSGGQKVRVAMALQLITKPKILFLDEPFGDLDPITLRDVANYLKIINERFGTTIVLVSHCVEFIKEISDRAILLDENRLVMEGNPEEVCEEFIRRSNARFMKEELKCKN</sequence>
<keyword id="KW-0067">ATP-binding</keyword>
<keyword id="KW-0547">Nucleotide-binding</keyword>
<keyword id="KW-1185">Reference proteome</keyword>
<keyword id="KW-0677">Repeat</keyword>
<keyword id="KW-0813">Transport</keyword>
<feature type="chain" id="PRO_0000093227" description="Uncharacterized ABC transporter ATP-binding protein MJ1662">
    <location>
        <begin position="1"/>
        <end position="555"/>
    </location>
</feature>
<feature type="domain" description="ABC transporter 1" evidence="1">
    <location>
        <begin position="4"/>
        <end position="244"/>
    </location>
</feature>
<feature type="domain" description="ABC transporter 2" evidence="1">
    <location>
        <begin position="255"/>
        <end position="547"/>
    </location>
</feature>
<feature type="binding site" evidence="1">
    <location>
        <begin position="36"/>
        <end position="43"/>
    </location>
    <ligand>
        <name>ATP</name>
        <dbReference type="ChEBI" id="CHEBI:30616"/>
        <label>1</label>
    </ligand>
</feature>
<feature type="binding site" evidence="1">
    <location>
        <begin position="292"/>
        <end position="299"/>
    </location>
    <ligand>
        <name>ATP</name>
        <dbReference type="ChEBI" id="CHEBI:30616"/>
        <label>2</label>
    </ligand>
</feature>
<name>Y1662_METJA</name>
<comment type="similarity">
    <text evidence="2">Belongs to the ABC transporter superfamily.</text>
</comment>
<dbReference type="EMBL" id="L77117">
    <property type="protein sequence ID" value="AAB99680.1"/>
    <property type="molecule type" value="Genomic_DNA"/>
</dbReference>
<dbReference type="RefSeq" id="WP_010871186.1">
    <property type="nucleotide sequence ID" value="NC_000909.1"/>
</dbReference>
<dbReference type="SMR" id="Q59056"/>
<dbReference type="FunCoup" id="Q59056">
    <property type="interactions" value="7"/>
</dbReference>
<dbReference type="STRING" id="243232.MJ_1662"/>
<dbReference type="PaxDb" id="243232-MJ_1662"/>
<dbReference type="EnsemblBacteria" id="AAB99680">
    <property type="protein sequence ID" value="AAB99680"/>
    <property type="gene ID" value="MJ_1662"/>
</dbReference>
<dbReference type="GeneID" id="1452571"/>
<dbReference type="KEGG" id="mja:MJ_1662"/>
<dbReference type="eggNOG" id="arCOG00185">
    <property type="taxonomic scope" value="Archaea"/>
</dbReference>
<dbReference type="HOGENOM" id="CLU_000604_86_2_2"/>
<dbReference type="InParanoid" id="Q59056"/>
<dbReference type="OrthoDB" id="97750at2157"/>
<dbReference type="PhylomeDB" id="Q59056"/>
<dbReference type="Proteomes" id="UP000000805">
    <property type="component" value="Chromosome"/>
</dbReference>
<dbReference type="GO" id="GO:0005524">
    <property type="term" value="F:ATP binding"/>
    <property type="evidence" value="ECO:0007669"/>
    <property type="project" value="UniProtKB-KW"/>
</dbReference>
<dbReference type="GO" id="GO:0016887">
    <property type="term" value="F:ATP hydrolysis activity"/>
    <property type="evidence" value="ECO:0007669"/>
    <property type="project" value="InterPro"/>
</dbReference>
<dbReference type="GO" id="GO:0019700">
    <property type="term" value="P:organic phosphonate catabolic process"/>
    <property type="evidence" value="ECO:0000318"/>
    <property type="project" value="GO_Central"/>
</dbReference>
<dbReference type="Gene3D" id="3.40.50.300">
    <property type="entry name" value="P-loop containing nucleotide triphosphate hydrolases"/>
    <property type="match status" value="2"/>
</dbReference>
<dbReference type="InterPro" id="IPR003593">
    <property type="entry name" value="AAA+_ATPase"/>
</dbReference>
<dbReference type="InterPro" id="IPR003439">
    <property type="entry name" value="ABC_transporter-like_ATP-bd"/>
</dbReference>
<dbReference type="InterPro" id="IPR017871">
    <property type="entry name" value="ABC_transporter-like_CS"/>
</dbReference>
<dbReference type="InterPro" id="IPR027417">
    <property type="entry name" value="P-loop_NTPase"/>
</dbReference>
<dbReference type="PANTHER" id="PTHR42764">
    <property type="entry name" value="PHOSPHONATES UTILIZATION ATP-BINDING PROTEIN PHNK-RELATED"/>
    <property type="match status" value="1"/>
</dbReference>
<dbReference type="PANTHER" id="PTHR42764:SF1">
    <property type="entry name" value="PHOSPHONATES UTILIZATION ATP-BINDING PROTEIN PHNK-RELATED"/>
    <property type="match status" value="1"/>
</dbReference>
<dbReference type="Pfam" id="PF00005">
    <property type="entry name" value="ABC_tran"/>
    <property type="match status" value="2"/>
</dbReference>
<dbReference type="SMART" id="SM00382">
    <property type="entry name" value="AAA"/>
    <property type="match status" value="2"/>
</dbReference>
<dbReference type="SUPFAM" id="SSF52540">
    <property type="entry name" value="P-loop containing nucleoside triphosphate hydrolases"/>
    <property type="match status" value="2"/>
</dbReference>
<dbReference type="PROSITE" id="PS00211">
    <property type="entry name" value="ABC_TRANSPORTER_1"/>
    <property type="match status" value="2"/>
</dbReference>
<dbReference type="PROSITE" id="PS50893">
    <property type="entry name" value="ABC_TRANSPORTER_2"/>
    <property type="match status" value="2"/>
</dbReference>
<evidence type="ECO:0000255" key="1">
    <source>
        <dbReference type="PROSITE-ProRule" id="PRU00434"/>
    </source>
</evidence>
<evidence type="ECO:0000305" key="2"/>
<accession>Q59056</accession>